<protein>
    <recommendedName>
        <fullName evidence="1">tRNA-specific 2-thiouridylase MnmA</fullName>
        <ecNumber evidence="1">2.8.1.13</ecNumber>
    </recommendedName>
</protein>
<comment type="function">
    <text evidence="1">Catalyzes the 2-thiolation of uridine at the wobble position (U34) of tRNA, leading to the formation of s(2)U34.</text>
</comment>
<comment type="catalytic activity">
    <reaction evidence="1">
        <text>S-sulfanyl-L-cysteinyl-[protein] + uridine(34) in tRNA + AH2 + ATP = 2-thiouridine(34) in tRNA + L-cysteinyl-[protein] + A + AMP + diphosphate + H(+)</text>
        <dbReference type="Rhea" id="RHEA:47032"/>
        <dbReference type="Rhea" id="RHEA-COMP:10131"/>
        <dbReference type="Rhea" id="RHEA-COMP:11726"/>
        <dbReference type="Rhea" id="RHEA-COMP:11727"/>
        <dbReference type="Rhea" id="RHEA-COMP:11728"/>
        <dbReference type="ChEBI" id="CHEBI:13193"/>
        <dbReference type="ChEBI" id="CHEBI:15378"/>
        <dbReference type="ChEBI" id="CHEBI:17499"/>
        <dbReference type="ChEBI" id="CHEBI:29950"/>
        <dbReference type="ChEBI" id="CHEBI:30616"/>
        <dbReference type="ChEBI" id="CHEBI:33019"/>
        <dbReference type="ChEBI" id="CHEBI:61963"/>
        <dbReference type="ChEBI" id="CHEBI:65315"/>
        <dbReference type="ChEBI" id="CHEBI:87170"/>
        <dbReference type="ChEBI" id="CHEBI:456215"/>
        <dbReference type="EC" id="2.8.1.13"/>
    </reaction>
</comment>
<comment type="subcellular location">
    <subcellularLocation>
        <location evidence="1">Cytoplasm</location>
    </subcellularLocation>
</comment>
<comment type="similarity">
    <text evidence="1">Belongs to the MnmA/TRMU family.</text>
</comment>
<reference key="1">
    <citation type="journal article" date="2008" name="J. Biotechnol.">
        <title>The lifestyle of Corynebacterium urealyticum derived from its complete genome sequence established by pyrosequencing.</title>
        <authorList>
            <person name="Tauch A."/>
            <person name="Trost E."/>
            <person name="Tilker A."/>
            <person name="Ludewig U."/>
            <person name="Schneiker S."/>
            <person name="Goesmann A."/>
            <person name="Arnold W."/>
            <person name="Bekel T."/>
            <person name="Brinkrolf K."/>
            <person name="Brune I."/>
            <person name="Goetker S."/>
            <person name="Kalinowski J."/>
            <person name="Kamp P.-B."/>
            <person name="Lobo F.P."/>
            <person name="Viehoever P."/>
            <person name="Weisshaar B."/>
            <person name="Soriano F."/>
            <person name="Droege M."/>
            <person name="Puehler A."/>
        </authorList>
    </citation>
    <scope>NUCLEOTIDE SEQUENCE [LARGE SCALE GENOMIC DNA]</scope>
    <source>
        <strain>ATCC 43042 / DSM 7109</strain>
    </source>
</reference>
<accession>B1VFZ9</accession>
<keyword id="KW-0067">ATP-binding</keyword>
<keyword id="KW-0963">Cytoplasm</keyword>
<keyword id="KW-1015">Disulfide bond</keyword>
<keyword id="KW-0547">Nucleotide-binding</keyword>
<keyword id="KW-1185">Reference proteome</keyword>
<keyword id="KW-0694">RNA-binding</keyword>
<keyword id="KW-0808">Transferase</keyword>
<keyword id="KW-0819">tRNA processing</keyword>
<keyword id="KW-0820">tRNA-binding</keyword>
<dbReference type="EC" id="2.8.1.13" evidence="1"/>
<dbReference type="EMBL" id="AM942444">
    <property type="protein sequence ID" value="CAQ04688.1"/>
    <property type="molecule type" value="Genomic_DNA"/>
</dbReference>
<dbReference type="RefSeq" id="WP_012359979.1">
    <property type="nucleotide sequence ID" value="NC_010545.1"/>
</dbReference>
<dbReference type="SMR" id="B1VFZ9"/>
<dbReference type="STRING" id="504474.cu0728"/>
<dbReference type="GeneID" id="60603504"/>
<dbReference type="KEGG" id="cur:cu0728"/>
<dbReference type="eggNOG" id="COG0482">
    <property type="taxonomic scope" value="Bacteria"/>
</dbReference>
<dbReference type="HOGENOM" id="CLU_035188_0_2_11"/>
<dbReference type="Proteomes" id="UP000001727">
    <property type="component" value="Chromosome"/>
</dbReference>
<dbReference type="GO" id="GO:0005737">
    <property type="term" value="C:cytoplasm"/>
    <property type="evidence" value="ECO:0007669"/>
    <property type="project" value="UniProtKB-SubCell"/>
</dbReference>
<dbReference type="GO" id="GO:0005524">
    <property type="term" value="F:ATP binding"/>
    <property type="evidence" value="ECO:0007669"/>
    <property type="project" value="UniProtKB-KW"/>
</dbReference>
<dbReference type="GO" id="GO:0000049">
    <property type="term" value="F:tRNA binding"/>
    <property type="evidence" value="ECO:0007669"/>
    <property type="project" value="UniProtKB-KW"/>
</dbReference>
<dbReference type="GO" id="GO:0103016">
    <property type="term" value="F:tRNA-uridine 2-sulfurtransferase activity"/>
    <property type="evidence" value="ECO:0007669"/>
    <property type="project" value="UniProtKB-EC"/>
</dbReference>
<dbReference type="GO" id="GO:0002143">
    <property type="term" value="P:tRNA wobble position uridine thiolation"/>
    <property type="evidence" value="ECO:0007669"/>
    <property type="project" value="TreeGrafter"/>
</dbReference>
<dbReference type="CDD" id="cd01998">
    <property type="entry name" value="MnmA_TRMU-like"/>
    <property type="match status" value="1"/>
</dbReference>
<dbReference type="FunFam" id="3.40.50.620:FF:000057">
    <property type="entry name" value="tRNA-specific 2-thiouridylase MnmA"/>
    <property type="match status" value="1"/>
</dbReference>
<dbReference type="Gene3D" id="2.30.30.280">
    <property type="entry name" value="Adenine nucleotide alpha hydrolases-like domains"/>
    <property type="match status" value="1"/>
</dbReference>
<dbReference type="Gene3D" id="3.40.50.620">
    <property type="entry name" value="HUPs"/>
    <property type="match status" value="1"/>
</dbReference>
<dbReference type="Gene3D" id="2.40.30.10">
    <property type="entry name" value="Translation factors"/>
    <property type="match status" value="1"/>
</dbReference>
<dbReference type="HAMAP" id="MF_00144">
    <property type="entry name" value="tRNA_thiouridyl_MnmA"/>
    <property type="match status" value="1"/>
</dbReference>
<dbReference type="InterPro" id="IPR004506">
    <property type="entry name" value="MnmA-like"/>
</dbReference>
<dbReference type="InterPro" id="IPR046885">
    <property type="entry name" value="MnmA-like_C"/>
</dbReference>
<dbReference type="InterPro" id="IPR046884">
    <property type="entry name" value="MnmA-like_central"/>
</dbReference>
<dbReference type="InterPro" id="IPR023382">
    <property type="entry name" value="MnmA-like_central_sf"/>
</dbReference>
<dbReference type="InterPro" id="IPR014729">
    <property type="entry name" value="Rossmann-like_a/b/a_fold"/>
</dbReference>
<dbReference type="NCBIfam" id="NF001138">
    <property type="entry name" value="PRK00143.1"/>
    <property type="match status" value="1"/>
</dbReference>
<dbReference type="NCBIfam" id="TIGR00420">
    <property type="entry name" value="trmU"/>
    <property type="match status" value="1"/>
</dbReference>
<dbReference type="PANTHER" id="PTHR11933:SF5">
    <property type="entry name" value="MITOCHONDRIAL TRNA-SPECIFIC 2-THIOURIDYLASE 1"/>
    <property type="match status" value="1"/>
</dbReference>
<dbReference type="PANTHER" id="PTHR11933">
    <property type="entry name" value="TRNA 5-METHYLAMINOMETHYL-2-THIOURIDYLATE -METHYLTRANSFERASE"/>
    <property type="match status" value="1"/>
</dbReference>
<dbReference type="Pfam" id="PF03054">
    <property type="entry name" value="tRNA_Me_trans"/>
    <property type="match status" value="1"/>
</dbReference>
<dbReference type="Pfam" id="PF20258">
    <property type="entry name" value="tRNA_Me_trans_C"/>
    <property type="match status" value="1"/>
</dbReference>
<dbReference type="Pfam" id="PF20259">
    <property type="entry name" value="tRNA_Me_trans_M"/>
    <property type="match status" value="1"/>
</dbReference>
<dbReference type="SUPFAM" id="SSF52402">
    <property type="entry name" value="Adenine nucleotide alpha hydrolases-like"/>
    <property type="match status" value="1"/>
</dbReference>
<evidence type="ECO:0000255" key="1">
    <source>
        <dbReference type="HAMAP-Rule" id="MF_00144"/>
    </source>
</evidence>
<evidence type="ECO:0000256" key="2">
    <source>
        <dbReference type="SAM" id="MobiDB-lite"/>
    </source>
</evidence>
<name>MNMA_CORU7</name>
<organism>
    <name type="scientific">Corynebacterium urealyticum (strain ATCC 43042 / DSM 7109)</name>
    <dbReference type="NCBI Taxonomy" id="504474"/>
    <lineage>
        <taxon>Bacteria</taxon>
        <taxon>Bacillati</taxon>
        <taxon>Actinomycetota</taxon>
        <taxon>Actinomycetes</taxon>
        <taxon>Mycobacteriales</taxon>
        <taxon>Corynebacteriaceae</taxon>
        <taxon>Corynebacterium</taxon>
    </lineage>
</organism>
<gene>
    <name evidence="1" type="primary">mnmA</name>
    <name type="ordered locus">cu0728</name>
</gene>
<sequence length="406" mass="43385">MRVVAAMSGGVDSAVAAARALEAGHEVIGVHLALSQSPEAVRAGSRGCCSLEDSADARRVADKLGIPFYVWDFSDRFKADVIDNFVDSYAIGETPNPCLRCNEKIKFEALLDRSIALGFDAVVTGHYAQLHDGVLRRGVDADKDQSYVLGVLTDEQLAHCMFPVGDTVKPEIREEAADAGFGVANKPDSHDICFIPDGRTQAFLGSKIGLRPGLVRDTGGETVAEHDGVYGFTVGQRKGLGLPRETLDGRPRYVTDIDAHTGTVTVGTREDLRVGGIIADRLKRLDPEVHGREFDCEVQVRAHGGVVPARARLVDDPTPVTPAGRVKEADELPWRLELELLQPLEGVARGQAAVVYRPDEDGDILLGSGTIRATTALGAPIEEQPAPGTVGAVDADAIEQGEDAQR</sequence>
<proteinExistence type="inferred from homology"/>
<feature type="chain" id="PRO_1000096290" description="tRNA-specific 2-thiouridylase MnmA">
    <location>
        <begin position="1"/>
        <end position="406"/>
    </location>
</feature>
<feature type="region of interest" description="Interaction with tRNA" evidence="1">
    <location>
        <begin position="143"/>
        <end position="145"/>
    </location>
</feature>
<feature type="region of interest" description="Disordered" evidence="2">
    <location>
        <begin position="378"/>
        <end position="406"/>
    </location>
</feature>
<feature type="compositionally biased region" description="Acidic residues" evidence="2">
    <location>
        <begin position="396"/>
        <end position="406"/>
    </location>
</feature>
<feature type="active site" description="Nucleophile" evidence="1">
    <location>
        <position position="101"/>
    </location>
</feature>
<feature type="active site" description="Cysteine persulfide intermediate" evidence="1">
    <location>
        <position position="193"/>
    </location>
</feature>
<feature type="binding site" evidence="1">
    <location>
        <begin position="6"/>
        <end position="13"/>
    </location>
    <ligand>
        <name>ATP</name>
        <dbReference type="ChEBI" id="CHEBI:30616"/>
    </ligand>
</feature>
<feature type="binding site" evidence="1">
    <location>
        <position position="32"/>
    </location>
    <ligand>
        <name>ATP</name>
        <dbReference type="ChEBI" id="CHEBI:30616"/>
    </ligand>
</feature>
<feature type="binding site" evidence="1">
    <location>
        <position position="125"/>
    </location>
    <ligand>
        <name>ATP</name>
        <dbReference type="ChEBI" id="CHEBI:30616"/>
    </ligand>
</feature>
<feature type="site" description="Interaction with tRNA" evidence="1">
    <location>
        <position position="126"/>
    </location>
</feature>
<feature type="site" description="Interaction with tRNA" evidence="1">
    <location>
        <position position="351"/>
    </location>
</feature>
<feature type="disulfide bond" description="Alternate" evidence="1">
    <location>
        <begin position="101"/>
        <end position="193"/>
    </location>
</feature>